<protein>
    <recommendedName>
        <fullName evidence="1">23S rRNA (uracil(1939)-C(5))-methyltransferase RlmD</fullName>
        <ecNumber evidence="1">2.1.1.190</ecNumber>
    </recommendedName>
    <alternativeName>
        <fullName evidence="1">23S rRNA(m5U1939)-methyltransferase</fullName>
    </alternativeName>
</protein>
<reference key="1">
    <citation type="submission" date="2005-08" db="EMBL/GenBank/DDBJ databases">
        <title>Complete sequence of chromosome 1 of Nitrosospira multiformis ATCC 25196.</title>
        <authorList>
            <person name="Copeland A."/>
            <person name="Lucas S."/>
            <person name="Lapidus A."/>
            <person name="Barry K."/>
            <person name="Detter J.C."/>
            <person name="Glavina T."/>
            <person name="Hammon N."/>
            <person name="Israni S."/>
            <person name="Pitluck S."/>
            <person name="Chain P."/>
            <person name="Malfatti S."/>
            <person name="Shin M."/>
            <person name="Vergez L."/>
            <person name="Schmutz J."/>
            <person name="Larimer F."/>
            <person name="Land M."/>
            <person name="Hauser L."/>
            <person name="Kyrpides N."/>
            <person name="Lykidis A."/>
            <person name="Richardson P."/>
        </authorList>
    </citation>
    <scope>NUCLEOTIDE SEQUENCE [LARGE SCALE GENOMIC DNA]</scope>
    <source>
        <strain>ATCC 25196 / NCIMB 11849 / C 71</strain>
    </source>
</reference>
<accession>Q2Y6W3</accession>
<keyword id="KW-0004">4Fe-4S</keyword>
<keyword id="KW-0408">Iron</keyword>
<keyword id="KW-0411">Iron-sulfur</keyword>
<keyword id="KW-0479">Metal-binding</keyword>
<keyword id="KW-0489">Methyltransferase</keyword>
<keyword id="KW-1185">Reference proteome</keyword>
<keyword id="KW-0698">rRNA processing</keyword>
<keyword id="KW-0949">S-adenosyl-L-methionine</keyword>
<keyword id="KW-0808">Transferase</keyword>
<organism>
    <name type="scientific">Nitrosospira multiformis (strain ATCC 25196 / NCIMB 11849 / C 71)</name>
    <dbReference type="NCBI Taxonomy" id="323848"/>
    <lineage>
        <taxon>Bacteria</taxon>
        <taxon>Pseudomonadati</taxon>
        <taxon>Pseudomonadota</taxon>
        <taxon>Betaproteobacteria</taxon>
        <taxon>Nitrosomonadales</taxon>
        <taxon>Nitrosomonadaceae</taxon>
        <taxon>Nitrosospira</taxon>
    </lineage>
</organism>
<gene>
    <name evidence="1" type="primary">rlmD</name>
    <name type="synonym">rumA</name>
    <name type="ordered locus">Nmul_A2216</name>
</gene>
<proteinExistence type="inferred from homology"/>
<feature type="chain" id="PRO_0000229875" description="23S rRNA (uracil(1939)-C(5))-methyltransferase RlmD">
    <location>
        <begin position="1"/>
        <end position="439"/>
    </location>
</feature>
<feature type="domain" description="TRAM" evidence="1">
    <location>
        <begin position="1"/>
        <end position="54"/>
    </location>
</feature>
<feature type="active site" description="Nucleophile" evidence="1">
    <location>
        <position position="391"/>
    </location>
</feature>
<feature type="binding site" evidence="1">
    <location>
        <position position="67"/>
    </location>
    <ligand>
        <name>[4Fe-4S] cluster</name>
        <dbReference type="ChEBI" id="CHEBI:49883"/>
    </ligand>
</feature>
<feature type="binding site" evidence="1">
    <location>
        <position position="73"/>
    </location>
    <ligand>
        <name>[4Fe-4S] cluster</name>
        <dbReference type="ChEBI" id="CHEBI:49883"/>
    </ligand>
</feature>
<feature type="binding site" evidence="1">
    <location>
        <position position="76"/>
    </location>
    <ligand>
        <name>[4Fe-4S] cluster</name>
        <dbReference type="ChEBI" id="CHEBI:49883"/>
    </ligand>
</feature>
<feature type="binding site" evidence="1">
    <location>
        <position position="155"/>
    </location>
    <ligand>
        <name>[4Fe-4S] cluster</name>
        <dbReference type="ChEBI" id="CHEBI:49883"/>
    </ligand>
</feature>
<feature type="binding site" evidence="1">
    <location>
        <position position="264"/>
    </location>
    <ligand>
        <name>S-adenosyl-L-methionine</name>
        <dbReference type="ChEBI" id="CHEBI:59789"/>
    </ligand>
</feature>
<feature type="binding site" evidence="1">
    <location>
        <position position="293"/>
    </location>
    <ligand>
        <name>S-adenosyl-L-methionine</name>
        <dbReference type="ChEBI" id="CHEBI:59789"/>
    </ligand>
</feature>
<feature type="binding site" evidence="1">
    <location>
        <position position="298"/>
    </location>
    <ligand>
        <name>S-adenosyl-L-methionine</name>
        <dbReference type="ChEBI" id="CHEBI:59789"/>
    </ligand>
</feature>
<feature type="binding site" evidence="1">
    <location>
        <position position="314"/>
    </location>
    <ligand>
        <name>S-adenosyl-L-methionine</name>
        <dbReference type="ChEBI" id="CHEBI:59789"/>
    </ligand>
</feature>
<feature type="binding site" evidence="1">
    <location>
        <position position="342"/>
    </location>
    <ligand>
        <name>S-adenosyl-L-methionine</name>
        <dbReference type="ChEBI" id="CHEBI:59789"/>
    </ligand>
</feature>
<feature type="binding site" evidence="1">
    <location>
        <position position="363"/>
    </location>
    <ligand>
        <name>S-adenosyl-L-methionine</name>
        <dbReference type="ChEBI" id="CHEBI:59789"/>
    </ligand>
</feature>
<comment type="function">
    <text evidence="1">Catalyzes the formation of 5-methyl-uridine at position 1939 (m5U1939) in 23S rRNA.</text>
</comment>
<comment type="catalytic activity">
    <reaction evidence="1">
        <text>uridine(1939) in 23S rRNA + S-adenosyl-L-methionine = 5-methyluridine(1939) in 23S rRNA + S-adenosyl-L-homocysteine + H(+)</text>
        <dbReference type="Rhea" id="RHEA:42908"/>
        <dbReference type="Rhea" id="RHEA-COMP:10278"/>
        <dbReference type="Rhea" id="RHEA-COMP:10279"/>
        <dbReference type="ChEBI" id="CHEBI:15378"/>
        <dbReference type="ChEBI" id="CHEBI:57856"/>
        <dbReference type="ChEBI" id="CHEBI:59789"/>
        <dbReference type="ChEBI" id="CHEBI:65315"/>
        <dbReference type="ChEBI" id="CHEBI:74447"/>
        <dbReference type="EC" id="2.1.1.190"/>
    </reaction>
</comment>
<comment type="similarity">
    <text evidence="1">Belongs to the class I-like SAM-binding methyltransferase superfamily. RNA M5U methyltransferase family. RlmD subfamily.</text>
</comment>
<evidence type="ECO:0000255" key="1">
    <source>
        <dbReference type="HAMAP-Rule" id="MF_01010"/>
    </source>
</evidence>
<name>RLMD_NITMU</name>
<dbReference type="EC" id="2.1.1.190" evidence="1"/>
<dbReference type="EMBL" id="CP000103">
    <property type="protein sequence ID" value="ABB75508.1"/>
    <property type="molecule type" value="Genomic_DNA"/>
</dbReference>
<dbReference type="RefSeq" id="WP_011381514.1">
    <property type="nucleotide sequence ID" value="NC_007614.1"/>
</dbReference>
<dbReference type="SMR" id="Q2Y6W3"/>
<dbReference type="STRING" id="323848.Nmul_A2216"/>
<dbReference type="KEGG" id="nmu:Nmul_A2216"/>
<dbReference type="eggNOG" id="COG2265">
    <property type="taxonomic scope" value="Bacteria"/>
</dbReference>
<dbReference type="HOGENOM" id="CLU_014689_8_2_4"/>
<dbReference type="Proteomes" id="UP000002718">
    <property type="component" value="Chromosome"/>
</dbReference>
<dbReference type="GO" id="GO:0051539">
    <property type="term" value="F:4 iron, 4 sulfur cluster binding"/>
    <property type="evidence" value="ECO:0007669"/>
    <property type="project" value="UniProtKB-KW"/>
</dbReference>
<dbReference type="GO" id="GO:0005506">
    <property type="term" value="F:iron ion binding"/>
    <property type="evidence" value="ECO:0007669"/>
    <property type="project" value="UniProtKB-UniRule"/>
</dbReference>
<dbReference type="GO" id="GO:0003723">
    <property type="term" value="F:RNA binding"/>
    <property type="evidence" value="ECO:0007669"/>
    <property type="project" value="InterPro"/>
</dbReference>
<dbReference type="GO" id="GO:0070041">
    <property type="term" value="F:rRNA (uridine-C5-)-methyltransferase activity"/>
    <property type="evidence" value="ECO:0007669"/>
    <property type="project" value="UniProtKB-UniRule"/>
</dbReference>
<dbReference type="GO" id="GO:0070475">
    <property type="term" value="P:rRNA base methylation"/>
    <property type="evidence" value="ECO:0007669"/>
    <property type="project" value="TreeGrafter"/>
</dbReference>
<dbReference type="CDD" id="cd02440">
    <property type="entry name" value="AdoMet_MTases"/>
    <property type="match status" value="1"/>
</dbReference>
<dbReference type="Gene3D" id="2.40.50.1070">
    <property type="match status" value="1"/>
</dbReference>
<dbReference type="Gene3D" id="2.40.50.140">
    <property type="entry name" value="Nucleic acid-binding proteins"/>
    <property type="match status" value="1"/>
</dbReference>
<dbReference type="Gene3D" id="3.40.50.150">
    <property type="entry name" value="Vaccinia Virus protein VP39"/>
    <property type="match status" value="1"/>
</dbReference>
<dbReference type="HAMAP" id="MF_01010">
    <property type="entry name" value="23SrRNA_methyltr_RlmD"/>
    <property type="match status" value="1"/>
</dbReference>
<dbReference type="InterPro" id="IPR001566">
    <property type="entry name" value="23S_rRNA_MeTrfase_RlmD"/>
</dbReference>
<dbReference type="InterPro" id="IPR030390">
    <property type="entry name" value="MeTrfase_TrmA_AS"/>
</dbReference>
<dbReference type="InterPro" id="IPR030391">
    <property type="entry name" value="MeTrfase_TrmA_CS"/>
</dbReference>
<dbReference type="InterPro" id="IPR012340">
    <property type="entry name" value="NA-bd_OB-fold"/>
</dbReference>
<dbReference type="InterPro" id="IPR029063">
    <property type="entry name" value="SAM-dependent_MTases_sf"/>
</dbReference>
<dbReference type="InterPro" id="IPR002792">
    <property type="entry name" value="TRAM_dom"/>
</dbReference>
<dbReference type="InterPro" id="IPR010280">
    <property type="entry name" value="U5_MeTrfase_fam"/>
</dbReference>
<dbReference type="NCBIfam" id="NF009639">
    <property type="entry name" value="PRK13168.1"/>
    <property type="match status" value="1"/>
</dbReference>
<dbReference type="PANTHER" id="PTHR11061:SF49">
    <property type="entry name" value="23S RRNA (URACIL(1939)-C(5))-METHYLTRANSFERASE RLMD"/>
    <property type="match status" value="1"/>
</dbReference>
<dbReference type="PANTHER" id="PTHR11061">
    <property type="entry name" value="RNA M5U METHYLTRANSFERASE"/>
    <property type="match status" value="1"/>
</dbReference>
<dbReference type="Pfam" id="PF01938">
    <property type="entry name" value="TRAM"/>
    <property type="match status" value="1"/>
</dbReference>
<dbReference type="Pfam" id="PF05958">
    <property type="entry name" value="tRNA_U5-meth_tr"/>
    <property type="match status" value="1"/>
</dbReference>
<dbReference type="SUPFAM" id="SSF50249">
    <property type="entry name" value="Nucleic acid-binding proteins"/>
    <property type="match status" value="1"/>
</dbReference>
<dbReference type="SUPFAM" id="SSF53335">
    <property type="entry name" value="S-adenosyl-L-methionine-dependent methyltransferases"/>
    <property type="match status" value="1"/>
</dbReference>
<dbReference type="PROSITE" id="PS51687">
    <property type="entry name" value="SAM_MT_RNA_M5U"/>
    <property type="match status" value="1"/>
</dbReference>
<dbReference type="PROSITE" id="PS50926">
    <property type="entry name" value="TRAM"/>
    <property type="match status" value="1"/>
</dbReference>
<dbReference type="PROSITE" id="PS01230">
    <property type="entry name" value="TRMA_1"/>
    <property type="match status" value="1"/>
</dbReference>
<dbReference type="PROSITE" id="PS01231">
    <property type="entry name" value="TRMA_2"/>
    <property type="match status" value="1"/>
</dbReference>
<sequence length="439" mass="48959">MTAPVLIESLDQEGRGVAHAEGKVIFIEGALPGEVVTYNAYRRKPSFELAQVGQILKPAFSRVTPECHHFGICGGCSMQHMDVRTQVAAKQRVLEDNLKHIGKVAPELVLPAVYGSPWGYRYRARLSVRYVAKKGGVLVGFHEKRSSFIADMQACRIMPPRISALIMPLRKLVESLSIRERLPQIEVSLGEDVDVLVLRILEPLTAQDETLLKAFADQHHVQLFLQTGGPQTAYPFYPEDAPELSYTLPEFDVTIPFHPTEFTQVNPMVNRILVRRALNLLDPRRGERIADLFCGLGNFTLPVARRGAQVVGYEGSAALVSRARQNSQRNGLAGSTRFMEANLFEIDESWMREQGDFDKMLIDPPREGAVAVVTALEEKQLKPWRIVYVSCNPATLARDASVLVHRNGYALKAAGVINMFPHTAHVESIALFEKARRQA</sequence>